<evidence type="ECO:0000255" key="1">
    <source>
        <dbReference type="HAMAP-Rule" id="MF_01382"/>
    </source>
</evidence>
<protein>
    <recommendedName>
        <fullName evidence="1">Protein translocase subunit SecA</fullName>
        <ecNumber evidence="1">7.4.2.8</ecNumber>
    </recommendedName>
</protein>
<sequence length="865" mass="97976">MPNIIRKLVENDKKELKKLNKMALQVESFADEMEHLTDEQLKAKTPELKERIAKGESLDDLLYEAFAVCREAARRVLGLYPFHVQIMGGIVLHNGDVPEMRTGEGKTLTATMPVYLNALSGKGVHVVTVNEYLATRDMTEMGELYSWLGLTVGLNLNSKSPEEKREAYNCDITYSTSAELGFDYLRDNMVTRAVDMVQKPLNYALVDEVDSILVDEARTPLIISGQAESSSALYYRADQFTKTLKGQNLNVATSDYEEGDDYKIDLQSKTISLTEEGIDKAEKFFQIENLYDMENVALTHFVDNALRANFIMLHDIDYMVDENQEVLIIDQFTGRTMPGRRYSDGLHQAIEAKEAVPIQDESKTMASITIQNYFRMYKKLSGMTGTAKTEEEEFREIYNIQITPIPTNRPVQRLDHPDLLYPTLEAKFKAVIDDIKRRHAEGQPILIGTVAVETSELISKKLVEAKIPHEVLNAKNHFREAQIIMNAGQQGAVTIATNMAGRGTDIKLGPGVIDHADPEFRGLAVIGTERHESRRIDNQLRGRSGRQGDPGVSQFYLSLEDELMKRFGSERVSAFLDRMRISGEDAVIKSGLITRQIESSQKRVEGNNYDSRKQVLQYDDVIREQREVIYAQRQEVILTKEDMTPVLMGMFKRTIDRQVDGHELAGNLKDEETVKDLLQTVQNTMLPEEAIELSELTGLSGQAMKDLIFDKVKSRYASQMEKLADPERQLEFQRAVILRVVDNNWSEHIDALDQMRQSVGLRGYAQNNPIVEYQEESYKMYNNMIGAIEFEVTRLMMKAQIQPQTAIRQEAPRMTTTASQENITNVGPDTSVSEEISFENVGRNDPCPCGSGKKFKNCHGRTHIA</sequence>
<keyword id="KW-0067">ATP-binding</keyword>
<keyword id="KW-1003">Cell membrane</keyword>
<keyword id="KW-0963">Cytoplasm</keyword>
<keyword id="KW-0472">Membrane</keyword>
<keyword id="KW-0479">Metal-binding</keyword>
<keyword id="KW-0547">Nucleotide-binding</keyword>
<keyword id="KW-0653">Protein transport</keyword>
<keyword id="KW-1278">Translocase</keyword>
<keyword id="KW-0811">Translocation</keyword>
<keyword id="KW-0813">Transport</keyword>
<keyword id="KW-0862">Zinc</keyword>
<gene>
    <name evidence="1" type="primary">secA</name>
    <name type="ordered locus">LACR_0101</name>
</gene>
<accession>Q032Z6</accession>
<proteinExistence type="inferred from homology"/>
<feature type="chain" id="PRO_1000073482" description="Protein translocase subunit SecA">
    <location>
        <begin position="1"/>
        <end position="865"/>
    </location>
</feature>
<feature type="binding site" evidence="1">
    <location>
        <position position="85"/>
    </location>
    <ligand>
        <name>ATP</name>
        <dbReference type="ChEBI" id="CHEBI:30616"/>
    </ligand>
</feature>
<feature type="binding site" evidence="1">
    <location>
        <begin position="103"/>
        <end position="107"/>
    </location>
    <ligand>
        <name>ATP</name>
        <dbReference type="ChEBI" id="CHEBI:30616"/>
    </ligand>
</feature>
<feature type="binding site" evidence="1">
    <location>
        <position position="505"/>
    </location>
    <ligand>
        <name>ATP</name>
        <dbReference type="ChEBI" id="CHEBI:30616"/>
    </ligand>
</feature>
<feature type="binding site" evidence="1">
    <location>
        <position position="847"/>
    </location>
    <ligand>
        <name>Zn(2+)</name>
        <dbReference type="ChEBI" id="CHEBI:29105"/>
    </ligand>
</feature>
<feature type="binding site" evidence="1">
    <location>
        <position position="849"/>
    </location>
    <ligand>
        <name>Zn(2+)</name>
        <dbReference type="ChEBI" id="CHEBI:29105"/>
    </ligand>
</feature>
<feature type="binding site" evidence="1">
    <location>
        <position position="858"/>
    </location>
    <ligand>
        <name>Zn(2+)</name>
        <dbReference type="ChEBI" id="CHEBI:29105"/>
    </ligand>
</feature>
<feature type="binding site" evidence="1">
    <location>
        <position position="859"/>
    </location>
    <ligand>
        <name>Zn(2+)</name>
        <dbReference type="ChEBI" id="CHEBI:29105"/>
    </ligand>
</feature>
<organism>
    <name type="scientific">Lactococcus lactis subsp. cremoris (strain SK11)</name>
    <dbReference type="NCBI Taxonomy" id="272622"/>
    <lineage>
        <taxon>Bacteria</taxon>
        <taxon>Bacillati</taxon>
        <taxon>Bacillota</taxon>
        <taxon>Bacilli</taxon>
        <taxon>Lactobacillales</taxon>
        <taxon>Streptococcaceae</taxon>
        <taxon>Lactococcus</taxon>
        <taxon>Lactococcus cremoris subsp. cremoris</taxon>
    </lineage>
</organism>
<comment type="function">
    <text evidence="1">Part of the Sec protein translocase complex. Interacts with the SecYEG preprotein conducting channel. Has a central role in coupling the hydrolysis of ATP to the transfer of proteins into and across the cell membrane, serving as an ATP-driven molecular motor driving the stepwise translocation of polypeptide chains across the membrane.</text>
</comment>
<comment type="catalytic activity">
    <reaction evidence="1">
        <text>ATP + H2O + cellular proteinSide 1 = ADP + phosphate + cellular proteinSide 2.</text>
        <dbReference type="EC" id="7.4.2.8"/>
    </reaction>
</comment>
<comment type="cofactor">
    <cofactor evidence="1">
        <name>Zn(2+)</name>
        <dbReference type="ChEBI" id="CHEBI:29105"/>
    </cofactor>
    <text evidence="1">May bind 1 zinc ion per subunit.</text>
</comment>
<comment type="subunit">
    <text evidence="1">Monomer and homodimer. Part of the essential Sec protein translocation apparatus which comprises SecA, SecYEG and auxiliary proteins SecDF. Other proteins may also be involved.</text>
</comment>
<comment type="subcellular location">
    <subcellularLocation>
        <location evidence="1">Cell membrane</location>
        <topology evidence="1">Peripheral membrane protein</topology>
        <orientation evidence="1">Cytoplasmic side</orientation>
    </subcellularLocation>
    <subcellularLocation>
        <location evidence="1">Cytoplasm</location>
    </subcellularLocation>
    <text evidence="1">Distribution is 50-50.</text>
</comment>
<comment type="similarity">
    <text evidence="1">Belongs to the SecA family.</text>
</comment>
<dbReference type="EC" id="7.4.2.8" evidence="1"/>
<dbReference type="EMBL" id="CP000425">
    <property type="protein sequence ID" value="ABJ71726.1"/>
    <property type="molecule type" value="Genomic_DNA"/>
</dbReference>
<dbReference type="RefSeq" id="WP_011675163.1">
    <property type="nucleotide sequence ID" value="NC_008527.1"/>
</dbReference>
<dbReference type="SMR" id="Q032Z6"/>
<dbReference type="KEGG" id="llc:LACR_0101"/>
<dbReference type="HOGENOM" id="CLU_005314_3_0_9"/>
<dbReference type="Proteomes" id="UP000000240">
    <property type="component" value="Chromosome"/>
</dbReference>
<dbReference type="GO" id="GO:0031522">
    <property type="term" value="C:cell envelope Sec protein transport complex"/>
    <property type="evidence" value="ECO:0007669"/>
    <property type="project" value="TreeGrafter"/>
</dbReference>
<dbReference type="GO" id="GO:0005829">
    <property type="term" value="C:cytosol"/>
    <property type="evidence" value="ECO:0007669"/>
    <property type="project" value="TreeGrafter"/>
</dbReference>
<dbReference type="GO" id="GO:0005886">
    <property type="term" value="C:plasma membrane"/>
    <property type="evidence" value="ECO:0007669"/>
    <property type="project" value="UniProtKB-SubCell"/>
</dbReference>
<dbReference type="GO" id="GO:0005524">
    <property type="term" value="F:ATP binding"/>
    <property type="evidence" value="ECO:0007669"/>
    <property type="project" value="UniProtKB-UniRule"/>
</dbReference>
<dbReference type="GO" id="GO:0046872">
    <property type="term" value="F:metal ion binding"/>
    <property type="evidence" value="ECO:0007669"/>
    <property type="project" value="UniProtKB-KW"/>
</dbReference>
<dbReference type="GO" id="GO:0008564">
    <property type="term" value="F:protein-exporting ATPase activity"/>
    <property type="evidence" value="ECO:0007669"/>
    <property type="project" value="UniProtKB-EC"/>
</dbReference>
<dbReference type="GO" id="GO:0065002">
    <property type="term" value="P:intracellular protein transmembrane transport"/>
    <property type="evidence" value="ECO:0007669"/>
    <property type="project" value="UniProtKB-UniRule"/>
</dbReference>
<dbReference type="GO" id="GO:0017038">
    <property type="term" value="P:protein import"/>
    <property type="evidence" value="ECO:0007669"/>
    <property type="project" value="InterPro"/>
</dbReference>
<dbReference type="GO" id="GO:0006605">
    <property type="term" value="P:protein targeting"/>
    <property type="evidence" value="ECO:0007669"/>
    <property type="project" value="UniProtKB-UniRule"/>
</dbReference>
<dbReference type="GO" id="GO:0043952">
    <property type="term" value="P:protein transport by the Sec complex"/>
    <property type="evidence" value="ECO:0007669"/>
    <property type="project" value="TreeGrafter"/>
</dbReference>
<dbReference type="CDD" id="cd17928">
    <property type="entry name" value="DEXDc_SecA"/>
    <property type="match status" value="1"/>
</dbReference>
<dbReference type="CDD" id="cd18803">
    <property type="entry name" value="SF2_C_secA"/>
    <property type="match status" value="1"/>
</dbReference>
<dbReference type="FunFam" id="3.40.50.300:FF:000429">
    <property type="entry name" value="Preprotein translocase subunit SecA"/>
    <property type="match status" value="1"/>
</dbReference>
<dbReference type="FunFam" id="3.90.1440.10:FF:000001">
    <property type="entry name" value="Preprotein translocase subunit SecA"/>
    <property type="match status" value="1"/>
</dbReference>
<dbReference type="Gene3D" id="1.10.3060.10">
    <property type="entry name" value="Helical scaffold and wing domains of SecA"/>
    <property type="match status" value="1"/>
</dbReference>
<dbReference type="Gene3D" id="3.40.50.300">
    <property type="entry name" value="P-loop containing nucleotide triphosphate hydrolases"/>
    <property type="match status" value="3"/>
</dbReference>
<dbReference type="Gene3D" id="3.90.1440.10">
    <property type="entry name" value="SecA, preprotein cross-linking domain"/>
    <property type="match status" value="1"/>
</dbReference>
<dbReference type="HAMAP" id="MF_01382">
    <property type="entry name" value="SecA"/>
    <property type="match status" value="1"/>
</dbReference>
<dbReference type="InterPro" id="IPR014001">
    <property type="entry name" value="Helicase_ATP-bd"/>
</dbReference>
<dbReference type="InterPro" id="IPR001650">
    <property type="entry name" value="Helicase_C-like"/>
</dbReference>
<dbReference type="InterPro" id="IPR027417">
    <property type="entry name" value="P-loop_NTPase"/>
</dbReference>
<dbReference type="InterPro" id="IPR004027">
    <property type="entry name" value="SEC_C_motif"/>
</dbReference>
<dbReference type="InterPro" id="IPR000185">
    <property type="entry name" value="SecA"/>
</dbReference>
<dbReference type="InterPro" id="IPR020937">
    <property type="entry name" value="SecA_CS"/>
</dbReference>
<dbReference type="InterPro" id="IPR011115">
    <property type="entry name" value="SecA_DEAD"/>
</dbReference>
<dbReference type="InterPro" id="IPR014018">
    <property type="entry name" value="SecA_motor_DEAD"/>
</dbReference>
<dbReference type="InterPro" id="IPR011130">
    <property type="entry name" value="SecA_preprotein_X-link_dom"/>
</dbReference>
<dbReference type="InterPro" id="IPR044722">
    <property type="entry name" value="SecA_SF2_C"/>
</dbReference>
<dbReference type="InterPro" id="IPR011116">
    <property type="entry name" value="SecA_Wing/Scaffold"/>
</dbReference>
<dbReference type="InterPro" id="IPR036266">
    <property type="entry name" value="SecA_Wing/Scaffold_sf"/>
</dbReference>
<dbReference type="InterPro" id="IPR036670">
    <property type="entry name" value="SecA_X-link_sf"/>
</dbReference>
<dbReference type="NCBIfam" id="NF006630">
    <property type="entry name" value="PRK09200.1"/>
    <property type="match status" value="1"/>
</dbReference>
<dbReference type="NCBIfam" id="NF009538">
    <property type="entry name" value="PRK12904.1"/>
    <property type="match status" value="1"/>
</dbReference>
<dbReference type="NCBIfam" id="TIGR00963">
    <property type="entry name" value="secA"/>
    <property type="match status" value="1"/>
</dbReference>
<dbReference type="PANTHER" id="PTHR30612:SF0">
    <property type="entry name" value="CHLOROPLAST PROTEIN-TRANSPORTING ATPASE"/>
    <property type="match status" value="1"/>
</dbReference>
<dbReference type="PANTHER" id="PTHR30612">
    <property type="entry name" value="SECA INNER MEMBRANE COMPONENT OF SEC PROTEIN SECRETION SYSTEM"/>
    <property type="match status" value="1"/>
</dbReference>
<dbReference type="Pfam" id="PF21090">
    <property type="entry name" value="P-loop_SecA"/>
    <property type="match status" value="2"/>
</dbReference>
<dbReference type="Pfam" id="PF02810">
    <property type="entry name" value="SEC-C"/>
    <property type="match status" value="1"/>
</dbReference>
<dbReference type="Pfam" id="PF07517">
    <property type="entry name" value="SecA_DEAD"/>
    <property type="match status" value="1"/>
</dbReference>
<dbReference type="Pfam" id="PF01043">
    <property type="entry name" value="SecA_PP_bind"/>
    <property type="match status" value="1"/>
</dbReference>
<dbReference type="Pfam" id="PF07516">
    <property type="entry name" value="SecA_SW"/>
    <property type="match status" value="1"/>
</dbReference>
<dbReference type="PRINTS" id="PR00906">
    <property type="entry name" value="SECA"/>
</dbReference>
<dbReference type="SMART" id="SM00957">
    <property type="entry name" value="SecA_DEAD"/>
    <property type="match status" value="1"/>
</dbReference>
<dbReference type="SMART" id="SM00958">
    <property type="entry name" value="SecA_PP_bind"/>
    <property type="match status" value="1"/>
</dbReference>
<dbReference type="SUPFAM" id="SSF81886">
    <property type="entry name" value="Helical scaffold and wing domains of SecA"/>
    <property type="match status" value="1"/>
</dbReference>
<dbReference type="SUPFAM" id="SSF52540">
    <property type="entry name" value="P-loop containing nucleoside triphosphate hydrolases"/>
    <property type="match status" value="2"/>
</dbReference>
<dbReference type="SUPFAM" id="SSF81767">
    <property type="entry name" value="Pre-protein crosslinking domain of SecA"/>
    <property type="match status" value="1"/>
</dbReference>
<dbReference type="PROSITE" id="PS01312">
    <property type="entry name" value="SECA"/>
    <property type="match status" value="1"/>
</dbReference>
<dbReference type="PROSITE" id="PS51196">
    <property type="entry name" value="SECA_MOTOR_DEAD"/>
    <property type="match status" value="1"/>
</dbReference>
<reference key="1">
    <citation type="journal article" date="2006" name="Proc. Natl. Acad. Sci. U.S.A.">
        <title>Comparative genomics of the lactic acid bacteria.</title>
        <authorList>
            <person name="Makarova K.S."/>
            <person name="Slesarev A."/>
            <person name="Wolf Y.I."/>
            <person name="Sorokin A."/>
            <person name="Mirkin B."/>
            <person name="Koonin E.V."/>
            <person name="Pavlov A."/>
            <person name="Pavlova N."/>
            <person name="Karamychev V."/>
            <person name="Polouchine N."/>
            <person name="Shakhova V."/>
            <person name="Grigoriev I."/>
            <person name="Lou Y."/>
            <person name="Rohksar D."/>
            <person name="Lucas S."/>
            <person name="Huang K."/>
            <person name="Goodstein D.M."/>
            <person name="Hawkins T."/>
            <person name="Plengvidhya V."/>
            <person name="Welker D."/>
            <person name="Hughes J."/>
            <person name="Goh Y."/>
            <person name="Benson A."/>
            <person name="Baldwin K."/>
            <person name="Lee J.-H."/>
            <person name="Diaz-Muniz I."/>
            <person name="Dosti B."/>
            <person name="Smeianov V."/>
            <person name="Wechter W."/>
            <person name="Barabote R."/>
            <person name="Lorca G."/>
            <person name="Altermann E."/>
            <person name="Barrangou R."/>
            <person name="Ganesan B."/>
            <person name="Xie Y."/>
            <person name="Rawsthorne H."/>
            <person name="Tamir D."/>
            <person name="Parker C."/>
            <person name="Breidt F."/>
            <person name="Broadbent J.R."/>
            <person name="Hutkins R."/>
            <person name="O'Sullivan D."/>
            <person name="Steele J."/>
            <person name="Unlu G."/>
            <person name="Saier M.H. Jr."/>
            <person name="Klaenhammer T."/>
            <person name="Richardson P."/>
            <person name="Kozyavkin S."/>
            <person name="Weimer B.C."/>
            <person name="Mills D.A."/>
        </authorList>
    </citation>
    <scope>NUCLEOTIDE SEQUENCE [LARGE SCALE GENOMIC DNA]</scope>
    <source>
        <strain>SK11</strain>
    </source>
</reference>
<name>SECA_LACLS</name>